<reference key="1">
    <citation type="journal article" date="2005" name="Plant J.">
        <title>Functional genomics uncovers three glucosyltransferases involved in the synthesis of the major sweet glucosides of Stevia rebaudiana.</title>
        <authorList>
            <person name="Richman A."/>
            <person name="Swanson A."/>
            <person name="Humphrey T."/>
            <person name="Chapman R."/>
            <person name="McGarvey B."/>
            <person name="Pocs R."/>
            <person name="Brandle J."/>
        </authorList>
    </citation>
    <scope>NUCLEOTIDE SEQUENCE [MRNA]</scope>
    <source>
        <tissue>Leaf</tissue>
    </source>
</reference>
<gene>
    <name evidence="3" type="primary">UGT91D1</name>
</gene>
<protein>
    <recommendedName>
        <fullName evidence="3">UDP-glycosyltransferase 91D1</fullName>
        <ecNumber evidence="4">2.4.1.-</ecNumber>
    </recommendedName>
</protein>
<sequence length="485" mass="54640">MYNVTYHQNSKAMATSDSIVDDRKQLHVATFPWLAFGHILPFLQLSKLIAEKGHKVSFLSTTRNIQRLSSHISPLINVVQLTLPRVQELPEDAEATTDVHPEDIQYLKKAVDGLQPEVTRFLEQHSPDWIIYDFTHYWLPSIAASLGISRAYFCVITPWTIAYLAPSSDAMINDSDGRTTVEDLTTPPKWFPFPTKVCWRKHDLARMEPYEAPGISDGYRMGMVFKGSDCLLFKCYHEFGTQWLPLLETLHQVPVVPVGLLPPEIPGDEKDETWVSIKKWLDGKQKGSVVYVALGSEALVSQTEVVELALGLELSGLPFVWAYRKPKGPAKSDSVELPDGFVERTRDRGLVWTSWAPQLRILSHESVCGFLTHCGSGSIVEGLMFGHPLIMLPIFCDQPLNARLLEDKQVGIEIPRNEEDGCLTKESVARSLRSVVVENEGEIYKANARALSKIYNDTKVEKEYVSQFVDYLEKNARAVAIDHES</sequence>
<organism>
    <name type="scientific">Stevia rebaudiana</name>
    <name type="common">Stevia</name>
    <name type="synonym">Eupatorium rebaudianum</name>
    <dbReference type="NCBI Taxonomy" id="55670"/>
    <lineage>
        <taxon>Eukaryota</taxon>
        <taxon>Viridiplantae</taxon>
        <taxon>Streptophyta</taxon>
        <taxon>Embryophyta</taxon>
        <taxon>Tracheophyta</taxon>
        <taxon>Spermatophyta</taxon>
        <taxon>Magnoliopsida</taxon>
        <taxon>eudicotyledons</taxon>
        <taxon>Gunneridae</taxon>
        <taxon>Pentapetalae</taxon>
        <taxon>asterids</taxon>
        <taxon>campanulids</taxon>
        <taxon>Asterales</taxon>
        <taxon>Asteraceae</taxon>
        <taxon>Asteroideae</taxon>
        <taxon>Heliantheae alliance</taxon>
        <taxon>Eupatorieae</taxon>
        <taxon>Stevia</taxon>
    </lineage>
</organism>
<name>U91D1_STERE</name>
<comment type="function">
    <text evidence="1">May glycosylate diterpenes or flavonols in leaves.</text>
</comment>
<comment type="similarity">
    <text evidence="4">Belongs to the UDP-glycosyltransferase family.</text>
</comment>
<feature type="chain" id="PRO_0000434473" description="UDP-glycosyltransferase 91D1">
    <location>
        <begin position="1"/>
        <end position="485"/>
    </location>
</feature>
<feature type="binding site" evidence="2">
    <location>
        <position position="296"/>
    </location>
    <ligand>
        <name>UDP-alpha-D-glucose</name>
        <dbReference type="ChEBI" id="CHEBI:58885"/>
    </ligand>
</feature>
<feature type="binding site" evidence="2">
    <location>
        <begin position="355"/>
        <end position="356"/>
    </location>
    <ligand>
        <name>UDP-alpha-D-glucose</name>
        <dbReference type="ChEBI" id="CHEBI:58885"/>
    </ligand>
</feature>
<feature type="binding site" evidence="2">
    <location>
        <begin position="373"/>
        <end position="381"/>
    </location>
    <ligand>
        <name>UDP-alpha-D-glucose</name>
        <dbReference type="ChEBI" id="CHEBI:58885"/>
    </ligand>
</feature>
<feature type="binding site" evidence="2">
    <location>
        <begin position="395"/>
        <end position="398"/>
    </location>
    <ligand>
        <name>UDP-alpha-D-glucose</name>
        <dbReference type="ChEBI" id="CHEBI:58885"/>
    </ligand>
</feature>
<evidence type="ECO:0000250" key="1">
    <source>
        <dbReference type="UniProtKB" id="Q6VAA6"/>
    </source>
</evidence>
<evidence type="ECO:0000250" key="2">
    <source>
        <dbReference type="UniProtKB" id="Q9M156"/>
    </source>
</evidence>
<evidence type="ECO:0000303" key="3">
    <source>
    </source>
</evidence>
<evidence type="ECO:0000305" key="4"/>
<proteinExistence type="evidence at transcript level"/>
<keyword id="KW-0328">Glycosyltransferase</keyword>
<keyword id="KW-0808">Transferase</keyword>
<dbReference type="EC" id="2.4.1.-" evidence="4"/>
<dbReference type="EMBL" id="AY345980">
    <property type="protein sequence ID" value="AAR06918.1"/>
    <property type="molecule type" value="mRNA"/>
</dbReference>
<dbReference type="SMR" id="Q6VAA8"/>
<dbReference type="CAZy" id="GT1">
    <property type="family name" value="Glycosyltransferase Family 1"/>
</dbReference>
<dbReference type="GO" id="GO:0035251">
    <property type="term" value="F:UDP-glucosyltransferase activity"/>
    <property type="evidence" value="ECO:0007669"/>
    <property type="project" value="InterPro"/>
</dbReference>
<dbReference type="CDD" id="cd03784">
    <property type="entry name" value="GT1_Gtf-like"/>
    <property type="match status" value="1"/>
</dbReference>
<dbReference type="FunFam" id="3.40.50.2000:FF:000037">
    <property type="entry name" value="Glycosyltransferase"/>
    <property type="match status" value="1"/>
</dbReference>
<dbReference type="Gene3D" id="3.40.50.2000">
    <property type="entry name" value="Glycogen Phosphorylase B"/>
    <property type="match status" value="2"/>
</dbReference>
<dbReference type="InterPro" id="IPR050481">
    <property type="entry name" value="UDP-glycosyltransf_plant"/>
</dbReference>
<dbReference type="InterPro" id="IPR002213">
    <property type="entry name" value="UDP_glucos_trans"/>
</dbReference>
<dbReference type="InterPro" id="IPR035595">
    <property type="entry name" value="UDP_glycos_trans_CS"/>
</dbReference>
<dbReference type="PANTHER" id="PTHR48049">
    <property type="entry name" value="GLYCOSYLTRANSFERASE"/>
    <property type="match status" value="1"/>
</dbReference>
<dbReference type="PANTHER" id="PTHR48049:SF60">
    <property type="entry name" value="UDP-GLYCOSYLTRANSFERASE 91B1"/>
    <property type="match status" value="1"/>
</dbReference>
<dbReference type="Pfam" id="PF00201">
    <property type="entry name" value="UDPGT"/>
    <property type="match status" value="1"/>
</dbReference>
<dbReference type="SUPFAM" id="SSF53756">
    <property type="entry name" value="UDP-Glycosyltransferase/glycogen phosphorylase"/>
    <property type="match status" value="1"/>
</dbReference>
<dbReference type="PROSITE" id="PS00375">
    <property type="entry name" value="UDPGT"/>
    <property type="match status" value="1"/>
</dbReference>
<accession>Q6VAA8</accession>